<feature type="chain" id="PRO_1000142560" description="Large ribosomal subunit protein bL25">
    <location>
        <begin position="1"/>
        <end position="196"/>
    </location>
</feature>
<keyword id="KW-0687">Ribonucleoprotein</keyword>
<keyword id="KW-0689">Ribosomal protein</keyword>
<keyword id="KW-0694">RNA-binding</keyword>
<keyword id="KW-0699">rRNA-binding</keyword>
<evidence type="ECO:0000255" key="1">
    <source>
        <dbReference type="HAMAP-Rule" id="MF_01334"/>
    </source>
</evidence>
<evidence type="ECO:0000305" key="2"/>
<accession>B2S2W9</accession>
<protein>
    <recommendedName>
        <fullName evidence="1">Large ribosomal subunit protein bL25</fullName>
    </recommendedName>
    <alternativeName>
        <fullName evidence="2">50S ribosomal protein L25</fullName>
    </alternativeName>
    <alternativeName>
        <fullName evidence="1">General stress protein CTC</fullName>
    </alternativeName>
</protein>
<organism>
    <name type="scientific">Treponema pallidum subsp. pallidum (strain SS14)</name>
    <dbReference type="NCBI Taxonomy" id="455434"/>
    <lineage>
        <taxon>Bacteria</taxon>
        <taxon>Pseudomonadati</taxon>
        <taxon>Spirochaetota</taxon>
        <taxon>Spirochaetia</taxon>
        <taxon>Spirochaetales</taxon>
        <taxon>Treponemataceae</taxon>
        <taxon>Treponema</taxon>
    </lineage>
</organism>
<name>RL25_TREPS</name>
<reference key="1">
    <citation type="journal article" date="2008" name="BMC Microbiol.">
        <title>Complete genome sequence of Treponema pallidum ssp. pallidum strain SS14 determined with oligonucleotide arrays.</title>
        <authorList>
            <person name="Matejkova P."/>
            <person name="Strouhal M."/>
            <person name="Smajs D."/>
            <person name="Norris S.J."/>
            <person name="Palzkill T."/>
            <person name="Petrosino J.F."/>
            <person name="Sodergren E."/>
            <person name="Norton J.E."/>
            <person name="Singh J."/>
            <person name="Richmond T.A."/>
            <person name="Molla M.N."/>
            <person name="Albert T.J."/>
            <person name="Weinstock G.M."/>
        </authorList>
    </citation>
    <scope>NUCLEOTIDE SEQUENCE [LARGE SCALE GENOMIC DNA]</scope>
    <source>
        <strain>SS14</strain>
    </source>
</reference>
<gene>
    <name evidence="1" type="primary">rplY</name>
    <name evidence="1" type="synonym">ctc</name>
    <name type="ordered locus">TPASS_0372</name>
</gene>
<dbReference type="EMBL" id="CP000805">
    <property type="protein sequence ID" value="ACD70798.1"/>
    <property type="molecule type" value="Genomic_DNA"/>
</dbReference>
<dbReference type="RefSeq" id="WP_010881820.1">
    <property type="nucleotide sequence ID" value="NC_021508.1"/>
</dbReference>
<dbReference type="SMR" id="B2S2W9"/>
<dbReference type="KEGG" id="tpp:TPASS_0372"/>
<dbReference type="PATRIC" id="fig|455434.6.peg.375"/>
<dbReference type="Proteomes" id="UP000001202">
    <property type="component" value="Chromosome"/>
</dbReference>
<dbReference type="GO" id="GO:0022625">
    <property type="term" value="C:cytosolic large ribosomal subunit"/>
    <property type="evidence" value="ECO:0007669"/>
    <property type="project" value="TreeGrafter"/>
</dbReference>
<dbReference type="GO" id="GO:0008097">
    <property type="term" value="F:5S rRNA binding"/>
    <property type="evidence" value="ECO:0007669"/>
    <property type="project" value="InterPro"/>
</dbReference>
<dbReference type="GO" id="GO:0003735">
    <property type="term" value="F:structural constituent of ribosome"/>
    <property type="evidence" value="ECO:0007669"/>
    <property type="project" value="InterPro"/>
</dbReference>
<dbReference type="GO" id="GO:0006412">
    <property type="term" value="P:translation"/>
    <property type="evidence" value="ECO:0007669"/>
    <property type="project" value="UniProtKB-UniRule"/>
</dbReference>
<dbReference type="CDD" id="cd00495">
    <property type="entry name" value="Ribosomal_L25_TL5_CTC"/>
    <property type="match status" value="1"/>
</dbReference>
<dbReference type="Gene3D" id="2.170.120.20">
    <property type="entry name" value="Ribosomal protein L25, beta domain"/>
    <property type="match status" value="1"/>
</dbReference>
<dbReference type="Gene3D" id="2.40.240.10">
    <property type="entry name" value="Ribosomal Protein L25, Chain P"/>
    <property type="match status" value="1"/>
</dbReference>
<dbReference type="HAMAP" id="MF_01334">
    <property type="entry name" value="Ribosomal_bL25_CTC"/>
    <property type="match status" value="1"/>
</dbReference>
<dbReference type="InterPro" id="IPR020056">
    <property type="entry name" value="Rbsml_bL25/Gln-tRNA_synth_N"/>
</dbReference>
<dbReference type="InterPro" id="IPR011035">
    <property type="entry name" value="Ribosomal_bL25/Gln-tRNA_synth"/>
</dbReference>
<dbReference type="InterPro" id="IPR020057">
    <property type="entry name" value="Ribosomal_bL25_b-dom"/>
</dbReference>
<dbReference type="InterPro" id="IPR037121">
    <property type="entry name" value="Ribosomal_bL25_C"/>
</dbReference>
<dbReference type="InterPro" id="IPR001021">
    <property type="entry name" value="Ribosomal_bL25_long"/>
</dbReference>
<dbReference type="InterPro" id="IPR029751">
    <property type="entry name" value="Ribosomal_L25_dom"/>
</dbReference>
<dbReference type="InterPro" id="IPR020930">
    <property type="entry name" value="Ribosomal_uL5_bac-type"/>
</dbReference>
<dbReference type="NCBIfam" id="TIGR00731">
    <property type="entry name" value="bL25_bact_ctc"/>
    <property type="match status" value="1"/>
</dbReference>
<dbReference type="NCBIfam" id="NF004139">
    <property type="entry name" value="PRK05618.4-2"/>
    <property type="match status" value="1"/>
</dbReference>
<dbReference type="PANTHER" id="PTHR33284">
    <property type="entry name" value="RIBOSOMAL PROTEIN L25/GLN-TRNA SYNTHETASE, ANTI-CODON-BINDING DOMAIN-CONTAINING PROTEIN"/>
    <property type="match status" value="1"/>
</dbReference>
<dbReference type="PANTHER" id="PTHR33284:SF1">
    <property type="entry name" value="RIBOSOMAL PROTEIN L25_GLN-TRNA SYNTHETASE, ANTI-CODON-BINDING DOMAIN-CONTAINING PROTEIN"/>
    <property type="match status" value="1"/>
</dbReference>
<dbReference type="Pfam" id="PF01386">
    <property type="entry name" value="Ribosomal_L25p"/>
    <property type="match status" value="1"/>
</dbReference>
<dbReference type="Pfam" id="PF14693">
    <property type="entry name" value="Ribosomal_TL5_C"/>
    <property type="match status" value="1"/>
</dbReference>
<dbReference type="SUPFAM" id="SSF50715">
    <property type="entry name" value="Ribosomal protein L25-like"/>
    <property type="match status" value="1"/>
</dbReference>
<proteinExistence type="inferred from homology"/>
<sequence length="196" mass="21619">MDERRLKGKRRVQLGKYAAVRGRKEGRLPAVMYDHRGVSVPLELAQQDFDRLFRALTRSTVLSLELDGGEVFCVFVKDYQHNMVSDRVEHVDFYAVEESVPLRMRIRLQLCGSPEGVRYGARLEKGLSYIEVESLPRNLPDRVVLDISGLGAGDVRRVRDVPLPASVVVLSDPDAVIVALSSSASEAGSPAGARTG</sequence>
<comment type="function">
    <text evidence="1">This is one of the proteins that binds to the 5S RNA in the ribosome where it forms part of the central protuberance.</text>
</comment>
<comment type="subunit">
    <text evidence="1">Part of the 50S ribosomal subunit; part of the 5S rRNA/L5/L18/L25 subcomplex. Contacts the 5S rRNA. Binds to the 5S rRNA independently of L5 and L18.</text>
</comment>
<comment type="similarity">
    <text evidence="1">Belongs to the bacterial ribosomal protein bL25 family. CTC subfamily.</text>
</comment>